<evidence type="ECO:0000255" key="1"/>
<evidence type="ECO:0000269" key="2">
    <source>
    </source>
</evidence>
<evidence type="ECO:0000303" key="3">
    <source>
    </source>
</evidence>
<evidence type="ECO:0000303" key="4">
    <source>
    </source>
</evidence>
<evidence type="ECO:0000303" key="5">
    <source>
    </source>
</evidence>
<evidence type="ECO:0000305" key="6"/>
<evidence type="ECO:0000305" key="7">
    <source>
    </source>
</evidence>
<sequence>MKTQFAVLIISMILMQMLVQTEAGFWGKLWEGVKSAIGKRSLRNQDQFDNMFDSDLSDADLKLLDDLFD</sequence>
<feature type="signal peptide" evidence="1">
    <location>
        <begin position="1"/>
        <end position="23"/>
    </location>
</feature>
<feature type="peptide" id="PRO_0000418787" description="Amphipathic peptide StCT2" evidence="7">
    <location>
        <begin position="24"/>
        <end position="37"/>
    </location>
</feature>
<feature type="propeptide" id="PRO_0000418788" evidence="7">
    <location>
        <begin position="41"/>
        <end position="69"/>
    </location>
</feature>
<feature type="modified residue" description="Isoleucine amide" evidence="7">
    <location>
        <position position="37"/>
    </location>
</feature>
<dbReference type="GO" id="GO:0005576">
    <property type="term" value="C:extracellular region"/>
    <property type="evidence" value="ECO:0007669"/>
    <property type="project" value="UniProtKB-SubCell"/>
</dbReference>
<dbReference type="GO" id="GO:0016020">
    <property type="term" value="C:membrane"/>
    <property type="evidence" value="ECO:0007669"/>
    <property type="project" value="UniProtKB-KW"/>
</dbReference>
<dbReference type="GO" id="GO:0044218">
    <property type="term" value="C:other organism cell membrane"/>
    <property type="evidence" value="ECO:0007669"/>
    <property type="project" value="UniProtKB-KW"/>
</dbReference>
<dbReference type="GO" id="GO:0042742">
    <property type="term" value="P:defense response to bacterium"/>
    <property type="evidence" value="ECO:0007669"/>
    <property type="project" value="UniProtKB-KW"/>
</dbReference>
<dbReference type="GO" id="GO:0031640">
    <property type="term" value="P:killing of cells of another organism"/>
    <property type="evidence" value="ECO:0007669"/>
    <property type="project" value="UniProtKB-KW"/>
</dbReference>
<accession>P0DJO4</accession>
<protein>
    <recommendedName>
        <fullName evidence="7">Amphipathic peptide StCT2</fullName>
        <shortName evidence="3">StCT2</shortName>
    </recommendedName>
    <alternativeName>
        <fullName evidence="5">Non-disulfide-bridged peptide 4.15</fullName>
        <shortName evidence="5">NDBP-4.15</shortName>
    </alternativeName>
    <alternativeName>
        <fullName evidence="4">Non-disulfide-bridged peptide 5.17</fullName>
        <shortName evidence="4">NDBP-5.17</shortName>
    </alternativeName>
</protein>
<name>NDB4F_SCOTI</name>
<comment type="function">
    <text evidence="2">Antimicrobial peptide that is rapidly bactericidal against Gram-positive bacteria.</text>
</comment>
<comment type="subcellular location">
    <subcellularLocation>
        <location evidence="7">Secreted</location>
    </subcellularLocation>
    <subcellularLocation>
        <location evidence="2">Target cell membrane</location>
    </subcellularLocation>
    <text>Forms a helical membrane channel in the prey.</text>
</comment>
<comment type="tissue specificity">
    <text evidence="7">Expressed by the venom gland.</text>
</comment>
<comment type="miscellaneous">
    <text evidence="7">Is highly capable of inhibiting antibiotic-resistant pathogen growth, including methicillin-resistant S.aureus. In vivo, shows high antimicrobial activity on a S.aureus-infected mouse model (PubMed:22542475).</text>
</comment>
<comment type="similarity">
    <text evidence="6">Belongs to the non-disulfide-bridged peptide (NDBP) superfamily. Short antimicrobial peptide (group 4) family.</text>
</comment>
<proteinExistence type="evidence at protein level"/>
<organism>
    <name type="scientific">Scorpiops tibetanus</name>
    <name type="common">Scorpion</name>
    <dbReference type="NCBI Taxonomy" id="500600"/>
    <lineage>
        <taxon>Eukaryota</taxon>
        <taxon>Metazoa</taxon>
        <taxon>Ecdysozoa</taxon>
        <taxon>Arthropoda</taxon>
        <taxon>Chelicerata</taxon>
        <taxon>Arachnida</taxon>
        <taxon>Scorpiones</taxon>
        <taxon>Iurida</taxon>
        <taxon>Chactoidea</taxon>
        <taxon>Euscorpiidae</taxon>
        <taxon>Scorpiopinae</taxon>
        <taxon>Scorpiopini</taxon>
        <taxon>Scorpiops</taxon>
    </lineage>
</organism>
<reference key="1">
    <citation type="journal article" date="2012" name="Peptides">
        <title>StCT2, a new antibacterial peptide characterized from the venom of the scorpion Scorpiops tibetanus.</title>
        <authorList>
            <person name="Cao L."/>
            <person name="Li Z."/>
            <person name="Zhang R."/>
            <person name="Wu Y."/>
            <person name="Li W."/>
            <person name="Cao Z."/>
        </authorList>
    </citation>
    <scope>NUCLEOTIDE SEQUENCE [MRNA]</scope>
    <scope>SYNTHESIS OF 24-37</scope>
    <scope>FUNCTION</scope>
    <scope>SUBCELLULAR LOCATION</scope>
    <scope>CIRCULAR DICHROISM ANALYSIS</scope>
    <scope>PROBABLE AMIDATION AT ILE-37</scope>
    <source>
        <tissue>Venom gland</tissue>
    </source>
</reference>
<reference key="2">
    <citation type="journal article" date="2013" name="Peptides">
        <title>Three new antimicrobial peptides from the scorpion Pandinus imperator.</title>
        <authorList>
            <person name="Zeng X.C."/>
            <person name="Zhou L."/>
            <person name="Shi W."/>
            <person name="Luo X."/>
            <person name="Zhang L."/>
            <person name="Nie Y."/>
            <person name="Wang J."/>
            <person name="Wu S."/>
            <person name="Cao B."/>
            <person name="Cao H."/>
        </authorList>
    </citation>
    <scope>NOMENCLATURE</scope>
</reference>
<reference key="3">
    <citation type="journal article" date="2014" name="Peptides">
        <title>Scorpion venom peptides with no disulfide bridges: a review.</title>
        <authorList>
            <person name="Almaaytah A."/>
            <person name="Albalas Q."/>
        </authorList>
    </citation>
    <scope>NOMENCLATURE</scope>
</reference>
<keyword id="KW-0027">Amidation</keyword>
<keyword id="KW-0044">Antibiotic</keyword>
<keyword id="KW-0929">Antimicrobial</keyword>
<keyword id="KW-0165">Cleavage on pair of basic residues</keyword>
<keyword id="KW-0204">Cytolysis</keyword>
<keyword id="KW-0354">Hemolysis</keyword>
<keyword id="KW-0472">Membrane</keyword>
<keyword id="KW-0964">Secreted</keyword>
<keyword id="KW-0732">Signal</keyword>
<keyword id="KW-1052">Target cell membrane</keyword>
<keyword id="KW-1053">Target membrane</keyword>
<keyword id="KW-0812">Transmembrane</keyword>